<reference key="1">
    <citation type="journal article" date="1995" name="Genes Dev.">
        <title>Gene trap capture of a novel mouse gene, jumonji, required for neural tube formation.</title>
        <authorList>
            <person name="Takeuchi T."/>
            <person name="Yamazaki Y."/>
            <person name="Katoh-Fukui Y."/>
            <person name="Tsuchiya R."/>
            <person name="Kondo S."/>
            <person name="Motoyama J."/>
            <person name="Higashinakagawa T."/>
        </authorList>
    </citation>
    <scope>NUCLEOTIDE SEQUENCE [MRNA]</scope>
    <scope>DISRUPTION PHENOTYPE</scope>
    <source>
        <strain>129/Ola</strain>
    </source>
</reference>
<reference key="2">
    <citation type="journal article" date="2005" name="Science">
        <title>The transcriptional landscape of the mammalian genome.</title>
        <authorList>
            <person name="Carninci P."/>
            <person name="Kasukawa T."/>
            <person name="Katayama S."/>
            <person name="Gough J."/>
            <person name="Frith M.C."/>
            <person name="Maeda N."/>
            <person name="Oyama R."/>
            <person name="Ravasi T."/>
            <person name="Lenhard B."/>
            <person name="Wells C."/>
            <person name="Kodzius R."/>
            <person name="Shimokawa K."/>
            <person name="Bajic V.B."/>
            <person name="Brenner S.E."/>
            <person name="Batalov S."/>
            <person name="Forrest A.R."/>
            <person name="Zavolan M."/>
            <person name="Davis M.J."/>
            <person name="Wilming L.G."/>
            <person name="Aidinis V."/>
            <person name="Allen J.E."/>
            <person name="Ambesi-Impiombato A."/>
            <person name="Apweiler R."/>
            <person name="Aturaliya R.N."/>
            <person name="Bailey T.L."/>
            <person name="Bansal M."/>
            <person name="Baxter L."/>
            <person name="Beisel K.W."/>
            <person name="Bersano T."/>
            <person name="Bono H."/>
            <person name="Chalk A.M."/>
            <person name="Chiu K.P."/>
            <person name="Choudhary V."/>
            <person name="Christoffels A."/>
            <person name="Clutterbuck D.R."/>
            <person name="Crowe M.L."/>
            <person name="Dalla E."/>
            <person name="Dalrymple B.P."/>
            <person name="de Bono B."/>
            <person name="Della Gatta G."/>
            <person name="di Bernardo D."/>
            <person name="Down T."/>
            <person name="Engstrom P."/>
            <person name="Fagiolini M."/>
            <person name="Faulkner G."/>
            <person name="Fletcher C.F."/>
            <person name="Fukushima T."/>
            <person name="Furuno M."/>
            <person name="Futaki S."/>
            <person name="Gariboldi M."/>
            <person name="Georgii-Hemming P."/>
            <person name="Gingeras T.R."/>
            <person name="Gojobori T."/>
            <person name="Green R.E."/>
            <person name="Gustincich S."/>
            <person name="Harbers M."/>
            <person name="Hayashi Y."/>
            <person name="Hensch T.K."/>
            <person name="Hirokawa N."/>
            <person name="Hill D."/>
            <person name="Huminiecki L."/>
            <person name="Iacono M."/>
            <person name="Ikeo K."/>
            <person name="Iwama A."/>
            <person name="Ishikawa T."/>
            <person name="Jakt M."/>
            <person name="Kanapin A."/>
            <person name="Katoh M."/>
            <person name="Kawasawa Y."/>
            <person name="Kelso J."/>
            <person name="Kitamura H."/>
            <person name="Kitano H."/>
            <person name="Kollias G."/>
            <person name="Krishnan S.P."/>
            <person name="Kruger A."/>
            <person name="Kummerfeld S.K."/>
            <person name="Kurochkin I.V."/>
            <person name="Lareau L.F."/>
            <person name="Lazarevic D."/>
            <person name="Lipovich L."/>
            <person name="Liu J."/>
            <person name="Liuni S."/>
            <person name="McWilliam S."/>
            <person name="Madan Babu M."/>
            <person name="Madera M."/>
            <person name="Marchionni L."/>
            <person name="Matsuda H."/>
            <person name="Matsuzawa S."/>
            <person name="Miki H."/>
            <person name="Mignone F."/>
            <person name="Miyake S."/>
            <person name="Morris K."/>
            <person name="Mottagui-Tabar S."/>
            <person name="Mulder N."/>
            <person name="Nakano N."/>
            <person name="Nakauchi H."/>
            <person name="Ng P."/>
            <person name="Nilsson R."/>
            <person name="Nishiguchi S."/>
            <person name="Nishikawa S."/>
            <person name="Nori F."/>
            <person name="Ohara O."/>
            <person name="Okazaki Y."/>
            <person name="Orlando V."/>
            <person name="Pang K.C."/>
            <person name="Pavan W.J."/>
            <person name="Pavesi G."/>
            <person name="Pesole G."/>
            <person name="Petrovsky N."/>
            <person name="Piazza S."/>
            <person name="Reed J."/>
            <person name="Reid J.F."/>
            <person name="Ring B.Z."/>
            <person name="Ringwald M."/>
            <person name="Rost B."/>
            <person name="Ruan Y."/>
            <person name="Salzberg S.L."/>
            <person name="Sandelin A."/>
            <person name="Schneider C."/>
            <person name="Schoenbach C."/>
            <person name="Sekiguchi K."/>
            <person name="Semple C.A."/>
            <person name="Seno S."/>
            <person name="Sessa L."/>
            <person name="Sheng Y."/>
            <person name="Shibata Y."/>
            <person name="Shimada H."/>
            <person name="Shimada K."/>
            <person name="Silva D."/>
            <person name="Sinclair B."/>
            <person name="Sperling S."/>
            <person name="Stupka E."/>
            <person name="Sugiura K."/>
            <person name="Sultana R."/>
            <person name="Takenaka Y."/>
            <person name="Taki K."/>
            <person name="Tammoja K."/>
            <person name="Tan S.L."/>
            <person name="Tang S."/>
            <person name="Taylor M.S."/>
            <person name="Tegner J."/>
            <person name="Teichmann S.A."/>
            <person name="Ueda H.R."/>
            <person name="van Nimwegen E."/>
            <person name="Verardo R."/>
            <person name="Wei C.L."/>
            <person name="Yagi K."/>
            <person name="Yamanishi H."/>
            <person name="Zabarovsky E."/>
            <person name="Zhu S."/>
            <person name="Zimmer A."/>
            <person name="Hide W."/>
            <person name="Bult C."/>
            <person name="Grimmond S.M."/>
            <person name="Teasdale R.D."/>
            <person name="Liu E.T."/>
            <person name="Brusic V."/>
            <person name="Quackenbush J."/>
            <person name="Wahlestedt C."/>
            <person name="Mattick J.S."/>
            <person name="Hume D.A."/>
            <person name="Kai C."/>
            <person name="Sasaki D."/>
            <person name="Tomaru Y."/>
            <person name="Fukuda S."/>
            <person name="Kanamori-Katayama M."/>
            <person name="Suzuki M."/>
            <person name="Aoki J."/>
            <person name="Arakawa T."/>
            <person name="Iida J."/>
            <person name="Imamura K."/>
            <person name="Itoh M."/>
            <person name="Kato T."/>
            <person name="Kawaji H."/>
            <person name="Kawagashira N."/>
            <person name="Kawashima T."/>
            <person name="Kojima M."/>
            <person name="Kondo S."/>
            <person name="Konno H."/>
            <person name="Nakano K."/>
            <person name="Ninomiya N."/>
            <person name="Nishio T."/>
            <person name="Okada M."/>
            <person name="Plessy C."/>
            <person name="Shibata K."/>
            <person name="Shiraki T."/>
            <person name="Suzuki S."/>
            <person name="Tagami M."/>
            <person name="Waki K."/>
            <person name="Watahiki A."/>
            <person name="Okamura-Oho Y."/>
            <person name="Suzuki H."/>
            <person name="Kawai J."/>
            <person name="Hayashizaki Y."/>
        </authorList>
    </citation>
    <scope>NUCLEOTIDE SEQUENCE [LARGE SCALE MRNA] (ISOFORM 1)</scope>
    <scope>NUCLEOTIDE SEQUENCE [LARGE SCALE MRNA] OF 1-1068 (ISOFORM 2)</scope>
    <source>
        <strain>C57BL/6J</strain>
        <tissue>Embryo</tissue>
        <tissue>Placenta</tissue>
        <tissue>Spinal cord</tissue>
    </source>
</reference>
<reference key="3">
    <citation type="submission" date="2005-07" db="EMBL/GenBank/DDBJ databases">
        <authorList>
            <person name="Mural R.J."/>
            <person name="Adams M.D."/>
            <person name="Myers E.W."/>
            <person name="Smith H.O."/>
            <person name="Venter J.C."/>
        </authorList>
    </citation>
    <scope>NUCLEOTIDE SEQUENCE [LARGE SCALE GENOMIC DNA]</scope>
</reference>
<reference key="4">
    <citation type="journal article" date="2004" name="Genome Res.">
        <title>The status, quality, and expansion of the NIH full-length cDNA project: the Mammalian Gene Collection (MGC).</title>
        <authorList>
            <consortium name="The MGC Project Team"/>
        </authorList>
    </citation>
    <scope>NUCLEOTIDE SEQUENCE [LARGE SCALE MRNA]</scope>
    <source>
        <strain>C57BL/6J</strain>
        <strain>Czech II</strain>
        <tissue>Brain</tissue>
        <tissue>Mammary gland</tissue>
    </source>
</reference>
<reference key="5">
    <citation type="journal article" date="1997" name="Mech. Dev.">
        <title>Organogenesis of the liver, thymus and spleen is affected in jumonji mutant mice.</title>
        <authorList>
            <person name="Motoyama J."/>
            <person name="Kitajima K."/>
            <person name="Kojima M."/>
            <person name="Kondo S."/>
            <person name="Takeuchi T."/>
        </authorList>
    </citation>
    <scope>DISRUPTION PHENOTYPE</scope>
</reference>
<reference key="6">
    <citation type="journal article" date="1999" name="Mech. Dev.">
        <title>jumonji gene is essential for the neurulation and cardiac development of mouse embryos with a C3H/He background.</title>
        <authorList>
            <person name="Takeuchi T."/>
            <person name="Kojima M."/>
            <person name="Nakajima K."/>
            <person name="Kondo S."/>
        </authorList>
    </citation>
    <scope>DISRUPTION PHENOTYPE</scope>
</reference>
<reference key="7">
    <citation type="journal article" date="2000" name="Biochem. Biophys. Res. Commun.">
        <title>Jumonji is a nuclear protein that participates in the negative regulation of cell growth.</title>
        <authorList>
            <person name="Toyoda M."/>
            <person name="Kojima M."/>
            <person name="Takeuchi T."/>
        </authorList>
    </citation>
    <scope>FUNCTION</scope>
    <scope>SUBCELLULAR LOCATION</scope>
</reference>
<reference key="8">
    <citation type="journal article" date="2000" name="Circ. Res.">
        <title>Jumonji, a nuclear protein that is necessary for normal heart development.</title>
        <authorList>
            <person name="Lee Y."/>
            <person name="Song A.J."/>
            <person name="Baker R."/>
            <person name="Micales B."/>
            <person name="Conway S.J."/>
            <person name="Lyons G.E."/>
        </authorList>
    </citation>
    <scope>FUNCTION</scope>
    <scope>SUBCELLULAR LOCATION</scope>
    <scope>TISSUE SPECIFICITY</scope>
    <scope>DISRUPTION PHENOTYPE</scope>
</reference>
<reference key="9">
    <citation type="journal article" date="2003" name="Dev. Cell">
        <title>jumonji downregulates cardiac cell proliferation by repressing cyclin D1 expression.</title>
        <authorList>
            <person name="Toyoda M."/>
            <person name="Shirato H."/>
            <person name="Nakajima K."/>
            <person name="Kojima M."/>
            <person name="Takahashi M."/>
            <person name="Kubota M."/>
            <person name="Suzuki-Migishima R."/>
            <person name="Motegi Y."/>
            <person name="Yokoyama M."/>
            <person name="Takeuchi T."/>
        </authorList>
    </citation>
    <scope>FUNCTION</scope>
</reference>
<reference key="10">
    <citation type="journal article" date="2003" name="J. Biol. Chem.">
        <title>JUMONJI, a critical factor for cardiac development, functions as a transcriptional repressor.</title>
        <authorList>
            <person name="Kim T.-G."/>
            <person name="Kraus J.C."/>
            <person name="Chen J."/>
            <person name="Lee Y."/>
        </authorList>
    </citation>
    <scope>FUNCTION</scope>
    <scope>DNA-BINDING</scope>
    <scope>NUCLEAR LOCALIZATION SIGNAL</scope>
    <scope>MUTAGENESIS OF 106-ARG-LYS-107</scope>
</reference>
<reference key="11">
    <citation type="journal article" date="2004" name="Mol. Cell. Biol.">
        <title>Jumonji represses atrial natriuretic factor gene expression by inhibiting transcriptional activities of cardiac transcription factors.</title>
        <authorList>
            <person name="Kim T.-G."/>
            <person name="Chen J."/>
            <person name="Sadoshima J."/>
            <person name="Lee Y."/>
        </authorList>
    </citation>
    <scope>FUNCTION</scope>
    <scope>INTERACTION WITH GATA4 AND NKX2-5</scope>
</reference>
<reference key="12">
    <citation type="journal article" date="2007" name="FEBS Lett.">
        <title>Characterization of zinc finger protein 496 that interacts with Jumonji/JARID2.</title>
        <authorList>
            <person name="Mysliwiec M.R."/>
            <person name="Kim T.G."/>
            <person name="Lee Y."/>
        </authorList>
    </citation>
    <scope>INTERACTION WITH ZNF496</scope>
</reference>
<reference key="13">
    <citation type="journal article" date="2005" name="J. Biol. Chem.">
        <title>Jumonji regulates cardiomyocyte proliferation via interaction with retinoblastoma protein.</title>
        <authorList>
            <person name="Jung J."/>
            <person name="Kim T.G."/>
            <person name="Lyons G.E."/>
            <person name="Kim H.R."/>
            <person name="Lee Y."/>
        </authorList>
    </citation>
    <scope>FUNCTION</scope>
    <scope>INTERACTION WITH RB1</scope>
</reference>
<reference key="14">
    <citation type="journal article" date="2009" name="Cell">
        <title>Jumonji modulates polycomb activity and self-renewal versus differentiation of stem cells.</title>
        <authorList>
            <person name="Shen X."/>
            <person name="Kim W."/>
            <person name="Fujiwara Y."/>
            <person name="Simon M.D."/>
            <person name="Liu Y."/>
            <person name="Mysliwiec M.R."/>
            <person name="Yuan G.C."/>
            <person name="Lee Y."/>
            <person name="Orkin S.H."/>
        </authorList>
    </citation>
    <scope>FUNCTION</scope>
    <scope>LACK OF HISTONE DEMETHYLASE ACTIVITY</scope>
    <scope>SUBCELLULAR LOCATION</scope>
    <scope>ASSOCIATION WITH THE PRC2 COMPLEX</scope>
</reference>
<reference key="15">
    <citation type="journal article" date="2009" name="Cell">
        <title>Jarid2/Jumonji coordinates control of PRC2 enzymatic activity and target gene occupancy in pluripotent cells.</title>
        <authorList>
            <person name="Peng J.C."/>
            <person name="Valouev A."/>
            <person name="Swigut T."/>
            <person name="Zhang J."/>
            <person name="Zhao Y."/>
            <person name="Sidow A."/>
            <person name="Wysocka J."/>
        </authorList>
    </citation>
    <scope>FUNCTION</scope>
    <scope>SUBCELLULAR LOCATION</scope>
    <scope>ASSOCIATION WITH THE PRC2 COMPLEX</scope>
    <scope>DOMAIN GSGFP MOTIF</scope>
    <scope>INTERACTION WITH SUZ12</scope>
</reference>
<reference key="16">
    <citation type="journal article" date="2009" name="J. Biol. Chem.">
        <title>A jumonji (Jarid2) protein complex represses cyclin D1 expression by methylation of histone H3-K9.</title>
        <authorList>
            <person name="Shirato H."/>
            <person name="Ogawa S."/>
            <person name="Nakajima K."/>
            <person name="Inagawa M."/>
            <person name="Kojima M."/>
            <person name="Tachibana M."/>
            <person name="Shinkai Y."/>
            <person name="Takeuchi T."/>
        </authorList>
    </citation>
    <scope>FUNCTION</scope>
</reference>
<reference key="17">
    <citation type="journal article" date="2010" name="Nature">
        <title>JARID2 regulates binding of the Polycomb repressive complex 2 to target genes in ES cells.</title>
        <authorList>
            <person name="Pasini D."/>
            <person name="Cloos P.A."/>
            <person name="Walfridsson J."/>
            <person name="Olsson L."/>
            <person name="Bukowski J.P."/>
            <person name="Johansen J.V."/>
            <person name="Bak M."/>
            <person name="Tommerup N."/>
            <person name="Rappsilber J."/>
            <person name="Helin K."/>
        </authorList>
    </citation>
    <scope>FUNCTION</scope>
    <scope>DNA-BINDING</scope>
    <scope>DOMAIN ARID</scope>
</reference>
<reference key="18">
    <citation type="journal article" date="2016" name="Stem Cells">
        <title>Combined Overexpression of JARID2, PRDM14, ESRRB, and SALL4A Dramatically Improves Efficiency and Kinetics of Reprogramming to Induced Pluripotent Stem Cells.</title>
        <authorList>
            <person name="Iseki H."/>
            <person name="Nakachi Y."/>
            <person name="Hishida T."/>
            <person name="Yamashita-Sugahara Y."/>
            <person name="Hirasaki M."/>
            <person name="Ueda A."/>
            <person name="Tanimoto Y."/>
            <person name="Iijima S."/>
            <person name="Sugiyama F."/>
            <person name="Yagami K."/>
            <person name="Takahashi S."/>
            <person name="Okuda A."/>
            <person name="Okazaki Y."/>
        </authorList>
    </citation>
    <scope>INTERACTION WITH ESRRB</scope>
</reference>
<reference key="19">
    <citation type="journal article" date="2020" name="Cell Rep.">
        <title>DEAD-Box Helicase 18 Counteracts PRC2 to Safeguard Ribosomal DNA in Pluripotency Regulation.</title>
        <authorList>
            <person name="Zhang H."/>
            <person name="Wu Z."/>
            <person name="Lu J.Y."/>
            <person name="Huang B."/>
            <person name="Zhou H."/>
            <person name="Xie W."/>
            <person name="Wang J."/>
            <person name="Shen X."/>
        </authorList>
    </citation>
    <scope>FUNCTION</scope>
    <scope>INTERACTION WITH DDX18</scope>
</reference>
<reference key="20">
    <citation type="journal article" date="2009" name="Proteins">
        <title>Solution structure of the AT-rich interaction domain of Jumonji/JARID2.</title>
        <authorList>
            <person name="Kusunoki H."/>
            <person name="Takeuchi T."/>
            <person name="Kohno T."/>
        </authorList>
    </citation>
    <scope>STRUCTURE BY NMR OF 615-730</scope>
</reference>
<organism>
    <name type="scientific">Mus musculus</name>
    <name type="common">Mouse</name>
    <dbReference type="NCBI Taxonomy" id="10090"/>
    <lineage>
        <taxon>Eukaryota</taxon>
        <taxon>Metazoa</taxon>
        <taxon>Chordata</taxon>
        <taxon>Craniata</taxon>
        <taxon>Vertebrata</taxon>
        <taxon>Euteleostomi</taxon>
        <taxon>Mammalia</taxon>
        <taxon>Eutheria</taxon>
        <taxon>Euarchontoglires</taxon>
        <taxon>Glires</taxon>
        <taxon>Rodentia</taxon>
        <taxon>Myomorpha</taxon>
        <taxon>Muroidea</taxon>
        <taxon>Muridae</taxon>
        <taxon>Murinae</taxon>
        <taxon>Mus</taxon>
        <taxon>Mus</taxon>
    </lineage>
</organism>
<gene>
    <name type="primary">Jarid2</name>
    <name type="synonym">Jmj</name>
</gene>
<evidence type="ECO:0000250" key="1">
    <source>
        <dbReference type="UniProtKB" id="Q92833"/>
    </source>
</evidence>
<evidence type="ECO:0000255" key="2">
    <source>
        <dbReference type="PROSITE-ProRule" id="PRU00355"/>
    </source>
</evidence>
<evidence type="ECO:0000255" key="3">
    <source>
        <dbReference type="PROSITE-ProRule" id="PRU00537"/>
    </source>
</evidence>
<evidence type="ECO:0000255" key="4">
    <source>
        <dbReference type="PROSITE-ProRule" id="PRU00538"/>
    </source>
</evidence>
<evidence type="ECO:0000256" key="5">
    <source>
        <dbReference type="SAM" id="MobiDB-lite"/>
    </source>
</evidence>
<evidence type="ECO:0000269" key="6">
    <source>
    </source>
</evidence>
<evidence type="ECO:0000269" key="7">
    <source>
    </source>
</evidence>
<evidence type="ECO:0000269" key="8">
    <source>
    </source>
</evidence>
<evidence type="ECO:0000269" key="9">
    <source>
    </source>
</evidence>
<evidence type="ECO:0000269" key="10">
    <source>
    </source>
</evidence>
<evidence type="ECO:0000269" key="11">
    <source>
    </source>
</evidence>
<evidence type="ECO:0000269" key="12">
    <source>
    </source>
</evidence>
<evidence type="ECO:0000269" key="13">
    <source>
    </source>
</evidence>
<evidence type="ECO:0000269" key="14">
    <source>
    </source>
</evidence>
<evidence type="ECO:0000269" key="15">
    <source>
    </source>
</evidence>
<evidence type="ECO:0000269" key="16">
    <source>
    </source>
</evidence>
<evidence type="ECO:0000269" key="17">
    <source>
    </source>
</evidence>
<evidence type="ECO:0000269" key="18">
    <source>
    </source>
</evidence>
<evidence type="ECO:0000269" key="19">
    <source>
    </source>
</evidence>
<evidence type="ECO:0000269" key="20">
    <source>
    </source>
</evidence>
<evidence type="ECO:0000269" key="21">
    <source>
    </source>
</evidence>
<evidence type="ECO:0000303" key="22">
    <source>
    </source>
</evidence>
<evidence type="ECO:0000305" key="23"/>
<evidence type="ECO:0007829" key="24">
    <source>
        <dbReference type="PDB" id="2RQ5"/>
    </source>
</evidence>
<sequence length="1234" mass="137445">MSKERPKRNIIQKKYDDSDGIPWSEERVVRKVLYLSLKEFKNAQKRQHGEGLAGSLKAVNGLLGNAQAKALGPASEQSENEKDDASQVSSTSNDVSSSDFEEGPSRKRPRLQAQRKFAQSQPNSPSTTPVKIVEPLLPPPATQISDLSKRKPKTEDFLTFLCLRGSPALPNSMVYFGSSQDEEDVEEEDDETEDVKATTNNASSSCQSTPRKGKTHKHVHNGHVFNGSSRSAREKEPAHKHRSKEATPGKEKHSEPRADSRREQASGAQPTAASAAASSAKGLAANHQPPPSHRSAQDLRKQVSKVNGVTRMSSLGAGTNSAKKIREVRPSPSKTVKYTATVTKGTVTYTKAKRELVKETKPNHHKPSSAVNHTISGKTESSNAKTRKQVLSLGGASKSTGPAASGLKASSRLNPKSCTKEVGGRQLREGLRNSKRRLEEAQQVDKPQSPPKKMKGVAGNAEAPGKKASAASGEKSLLNGHVKKEVPERSLERNRPKRAAAGKNMLGKQAHGKTEGTPCENRSTSQPESSHKPHDPQGKPEKGSGKSGWAAMDEIPVLRPSAKEFHDPLIYIESVRAQVEKYGMCRVIPPPDWRPECKLNDEMRFVTQIQHIHKLGRRWGPNVQRLACIKKHLRSQGITMDELPLIGGCELDLACFFRLINEMGGMQQVTDLKKWNKLADMLRIPKTAQDRLAKLQEAYCQYLLSYDSLSPEEHRRLEKEVLMEKEILEKRKGPLEGHTESDHHKFHSLPRFEPKNGLVHGVTPRNGFRSKLKEVGRAPLKTGRRRLFAQEKEVVKEEEEDKGVLNDFHKCIYKGRSVSLTTFYRTARNIMNMCFSKEPAPAEIEQEYWRLVEEKDCHVAVHCGKVDTNTHGSGFPVGKSEPFSRHGWNLTVLPNNTGSILRHLGAVPGVTIPWLNIGMVFSTSCWSRDQNHLPYIDYLHTGADCIWYCIPAEEENKLEDVVHTLLQGNGTPGLQMLESNVMISPEVLCKKGIKVHRTVQQSGQFVVCFPGSFVSKVCCGYNVSETVHFATTQWTSMGFETAKEMKRRHIAKPFSMEKLLYQIAQAEAKKENGPTLSTISALLDELRDTELRQRRLLFEAGLHSSARYGSHDGNSTVADGKKKPRKWLQLETSERRCQICQHLCYLSMVVQENENVVFCLECALRHVEKQKSCRGLKLMYRYDEEQIISLVNQICGKVSGKHGGIENCLNKPTPKRGPRKRATVDVPPSRLPSS</sequence>
<name>JARD2_MOUSE</name>
<protein>
    <recommendedName>
        <fullName>Protein Jumonji</fullName>
    </recommendedName>
    <alternativeName>
        <fullName>Jumonji/ARID domain-containing protein 2</fullName>
    </alternativeName>
</protein>
<accession>Q62315</accession>
<accession>Q3TPU4</accession>
<accession>Q3UHS7</accession>
<accession>Q99LD1</accession>
<feature type="chain" id="PRO_0000200592" description="Protein Jumonji">
    <location>
        <begin position="1"/>
        <end position="1234"/>
    </location>
</feature>
<feature type="domain" description="JmjN" evidence="3">
    <location>
        <begin position="555"/>
        <end position="596"/>
    </location>
</feature>
<feature type="domain" description="ARID" evidence="2">
    <location>
        <begin position="619"/>
        <end position="711"/>
    </location>
</feature>
<feature type="domain" description="JmjC" evidence="4">
    <location>
        <begin position="882"/>
        <end position="1046"/>
    </location>
</feature>
<feature type="region of interest" description="Disordered" evidence="5">
    <location>
        <begin position="1"/>
        <end position="22"/>
    </location>
</feature>
<feature type="region of interest" description="Disordered" evidence="5">
    <location>
        <begin position="68"/>
        <end position="150"/>
    </location>
</feature>
<feature type="region of interest" description="Sufficient for interaction with the PRC2 complex" evidence="1">
    <location>
        <begin position="141"/>
        <end position="170"/>
    </location>
</feature>
<feature type="region of interest" description="Disordered" evidence="5">
    <location>
        <begin position="169"/>
        <end position="339"/>
    </location>
</feature>
<feature type="region of interest" description="Disordered" evidence="5">
    <location>
        <begin position="354"/>
        <end position="548"/>
    </location>
</feature>
<feature type="region of interest" description="Disordered" evidence="5">
    <location>
        <begin position="1206"/>
        <end position="1234"/>
    </location>
</feature>
<feature type="short sequence motif" description="Nuclear localization signal" evidence="10">
    <location>
        <begin position="104"/>
        <end position="110"/>
    </location>
</feature>
<feature type="short sequence motif" description="GSGFP motif">
    <location>
        <begin position="872"/>
        <end position="876"/>
    </location>
</feature>
<feature type="compositionally biased region" description="Basic residues" evidence="5">
    <location>
        <begin position="1"/>
        <end position="11"/>
    </location>
</feature>
<feature type="compositionally biased region" description="Low complexity" evidence="5">
    <location>
        <begin position="86"/>
        <end position="98"/>
    </location>
</feature>
<feature type="compositionally biased region" description="Polar residues" evidence="5">
    <location>
        <begin position="117"/>
        <end position="129"/>
    </location>
</feature>
<feature type="compositionally biased region" description="Acidic residues" evidence="5">
    <location>
        <begin position="180"/>
        <end position="193"/>
    </location>
</feature>
<feature type="compositionally biased region" description="Polar residues" evidence="5">
    <location>
        <begin position="197"/>
        <end position="210"/>
    </location>
</feature>
<feature type="compositionally biased region" description="Basic residues" evidence="5">
    <location>
        <begin position="211"/>
        <end position="221"/>
    </location>
</feature>
<feature type="compositionally biased region" description="Basic and acidic residues" evidence="5">
    <location>
        <begin position="244"/>
        <end position="264"/>
    </location>
</feature>
<feature type="compositionally biased region" description="Low complexity" evidence="5">
    <location>
        <begin position="265"/>
        <end position="285"/>
    </location>
</feature>
<feature type="compositionally biased region" description="Polar residues" evidence="5">
    <location>
        <begin position="304"/>
        <end position="322"/>
    </location>
</feature>
<feature type="compositionally biased region" description="Polar residues" evidence="5">
    <location>
        <begin position="369"/>
        <end position="384"/>
    </location>
</feature>
<feature type="compositionally biased region" description="Basic and acidic residues" evidence="5">
    <location>
        <begin position="418"/>
        <end position="440"/>
    </location>
</feature>
<feature type="compositionally biased region" description="Basic and acidic residues" evidence="5">
    <location>
        <begin position="482"/>
        <end position="494"/>
    </location>
</feature>
<feature type="compositionally biased region" description="Basic and acidic residues" evidence="5">
    <location>
        <begin position="529"/>
        <end position="544"/>
    </location>
</feature>
<feature type="modified residue" description="Phosphoserine" evidence="1">
    <location>
        <position position="78"/>
    </location>
</feature>
<feature type="modified residue" description="N6-acetyllysine" evidence="1">
    <location>
        <position position="378"/>
    </location>
</feature>
<feature type="modified residue" description="Phosphoserine" evidence="1">
    <location>
        <position position="449"/>
    </location>
</feature>
<feature type="splice variant" id="VSP_038758" description="In isoform 2." evidence="22">
    <original>MSKERPKRNIIQKKYDDSDGIPWSEERVVRKVLYLSLKEFKNAQKRQHGEGLAGSLKAVN</original>
    <variation>MAAPRVCQVQFLVAYLEEPGIE</variation>
    <location>
        <begin position="1"/>
        <end position="60"/>
    </location>
</feature>
<feature type="mutagenesis site" description="Leads to cytoplasmic relocalization." evidence="10">
    <original>RK</original>
    <variation>AA</variation>
    <location>
        <begin position="106"/>
        <end position="107"/>
    </location>
</feature>
<feature type="sequence conflict" description="In Ref. 2; BAE37641." evidence="23" ref="2">
    <original>S</original>
    <variation>G</variation>
    <location>
        <position position="873"/>
    </location>
</feature>
<feature type="sequence conflict" description="In Ref. 4; AAH03374." evidence="23" ref="4">
    <original>L</original>
    <variation>Q</variation>
    <location>
        <position position="1096"/>
    </location>
</feature>
<feature type="helix" evidence="24">
    <location>
        <begin position="621"/>
        <end position="635"/>
    </location>
</feature>
<feature type="helix" evidence="24">
    <location>
        <begin position="653"/>
        <end position="662"/>
    </location>
</feature>
<feature type="helix" evidence="24">
    <location>
        <begin position="666"/>
        <end position="671"/>
    </location>
</feature>
<feature type="helix" evidence="24">
    <location>
        <begin position="675"/>
        <end position="681"/>
    </location>
</feature>
<feature type="helix" evidence="24">
    <location>
        <begin position="691"/>
        <end position="700"/>
    </location>
</feature>
<feature type="helix" evidence="24">
    <location>
        <begin position="703"/>
        <end position="708"/>
    </location>
</feature>
<feature type="helix" evidence="24">
    <location>
        <begin position="711"/>
        <end position="726"/>
    </location>
</feature>
<dbReference type="EMBL" id="D31967">
    <property type="protein sequence ID" value="BAA06736.1"/>
    <property type="molecule type" value="mRNA"/>
</dbReference>
<dbReference type="EMBL" id="AK045214">
    <property type="protein sequence ID" value="BAC32264.1"/>
    <property type="molecule type" value="mRNA"/>
</dbReference>
<dbReference type="EMBL" id="AK147226">
    <property type="protein sequence ID" value="BAE27780.1"/>
    <property type="status" value="ALT_FRAME"/>
    <property type="molecule type" value="mRNA"/>
</dbReference>
<dbReference type="EMBL" id="AK164134">
    <property type="protein sequence ID" value="BAE37641.1"/>
    <property type="molecule type" value="mRNA"/>
</dbReference>
<dbReference type="EMBL" id="CH466546">
    <property type="protein sequence ID" value="EDL41007.1"/>
    <property type="status" value="ALT_SEQ"/>
    <property type="molecule type" value="Genomic_DNA"/>
</dbReference>
<dbReference type="EMBL" id="BC003374">
    <property type="protein sequence ID" value="AAH03374.1"/>
    <property type="molecule type" value="mRNA"/>
</dbReference>
<dbReference type="EMBL" id="BC052444">
    <property type="protein sequence ID" value="AAH52444.1"/>
    <property type="molecule type" value="mRNA"/>
</dbReference>
<dbReference type="EMBL" id="BC060695">
    <property type="protein sequence ID" value="AAH60695.1"/>
    <property type="molecule type" value="mRNA"/>
</dbReference>
<dbReference type="CCDS" id="CCDS36646.1">
    <molecule id="Q62315-1"/>
</dbReference>
<dbReference type="PIR" id="T30254">
    <property type="entry name" value="T30254"/>
</dbReference>
<dbReference type="RefSeq" id="NP_001191972.1">
    <molecule id="Q62315-1"/>
    <property type="nucleotide sequence ID" value="NM_001205043.2"/>
</dbReference>
<dbReference type="RefSeq" id="NP_001191973.1">
    <molecule id="Q62315-1"/>
    <property type="nucleotide sequence ID" value="NM_001205044.1"/>
</dbReference>
<dbReference type="RefSeq" id="NP_068678.1">
    <molecule id="Q62315-1"/>
    <property type="nucleotide sequence ID" value="NM_021878.3"/>
</dbReference>
<dbReference type="RefSeq" id="XP_006516918.1">
    <property type="nucleotide sequence ID" value="XM_006516855.3"/>
</dbReference>
<dbReference type="RefSeq" id="XP_006516919.1">
    <property type="nucleotide sequence ID" value="XM_006516856.3"/>
</dbReference>
<dbReference type="RefSeq" id="XP_006516921.1">
    <molecule id="Q62315-2"/>
    <property type="nucleotide sequence ID" value="XM_006516858.5"/>
</dbReference>
<dbReference type="RefSeq" id="XP_006516922.1">
    <property type="nucleotide sequence ID" value="XM_006516859.2"/>
</dbReference>
<dbReference type="RefSeq" id="XP_006516923.1">
    <property type="nucleotide sequence ID" value="XM_006516860.2"/>
</dbReference>
<dbReference type="RefSeq" id="XP_017170888.1">
    <property type="nucleotide sequence ID" value="XM_017315399.1"/>
</dbReference>
<dbReference type="RefSeq" id="XP_036013756.1">
    <molecule id="Q62315-1"/>
    <property type="nucleotide sequence ID" value="XM_036157863.1"/>
</dbReference>
<dbReference type="RefSeq" id="XP_036013757.1">
    <molecule id="Q62315-1"/>
    <property type="nucleotide sequence ID" value="XM_036157864.1"/>
</dbReference>
<dbReference type="PDB" id="2RQ5">
    <property type="method" value="NMR"/>
    <property type="chains" value="A=615-730"/>
</dbReference>
<dbReference type="PDBsum" id="2RQ5"/>
<dbReference type="BMRB" id="Q62315"/>
<dbReference type="SMR" id="Q62315"/>
<dbReference type="BioGRID" id="200866">
    <property type="interactions" value="23"/>
</dbReference>
<dbReference type="DIP" id="DIP-34312N"/>
<dbReference type="FunCoup" id="Q62315">
    <property type="interactions" value="4185"/>
</dbReference>
<dbReference type="IntAct" id="Q62315">
    <property type="interactions" value="23"/>
</dbReference>
<dbReference type="MINT" id="Q62315"/>
<dbReference type="STRING" id="10090.ENSMUSP00000134205"/>
<dbReference type="GlyGen" id="Q62315">
    <property type="glycosylation" value="2 sites"/>
</dbReference>
<dbReference type="iPTMnet" id="Q62315"/>
<dbReference type="PhosphoSitePlus" id="Q62315"/>
<dbReference type="PaxDb" id="10090-ENSMUSP00000134205"/>
<dbReference type="PeptideAtlas" id="Q62315"/>
<dbReference type="ProteomicsDB" id="269360">
    <molecule id="Q62315-1"/>
</dbReference>
<dbReference type="ProteomicsDB" id="269361">
    <molecule id="Q62315-2"/>
</dbReference>
<dbReference type="Antibodypedia" id="25028">
    <property type="antibodies" value="226 antibodies from 27 providers"/>
</dbReference>
<dbReference type="DNASU" id="16468"/>
<dbReference type="Ensembl" id="ENSMUST00000044608.14">
    <molecule id="Q62315-1"/>
    <property type="protein sequence ID" value="ENSMUSP00000037774.8"/>
    <property type="gene ID" value="ENSMUSG00000038518.16"/>
</dbReference>
<dbReference type="Ensembl" id="ENSMUST00000173246.8">
    <molecule id="Q62315-1"/>
    <property type="protein sequence ID" value="ENSMUSP00000134205.2"/>
    <property type="gene ID" value="ENSMUSG00000038518.16"/>
</dbReference>
<dbReference type="Ensembl" id="ENSMUST00000173704.8">
    <molecule id="Q62315-1"/>
    <property type="protein sequence ID" value="ENSMUSP00000134675.2"/>
    <property type="gene ID" value="ENSMUSG00000038518.16"/>
</dbReference>
<dbReference type="GeneID" id="16468"/>
<dbReference type="KEGG" id="mmu:16468"/>
<dbReference type="UCSC" id="uc007qgr.2">
    <molecule id="Q62315-1"/>
    <property type="organism name" value="mouse"/>
</dbReference>
<dbReference type="UCSC" id="uc007qgv.1">
    <molecule id="Q62315-2"/>
    <property type="organism name" value="mouse"/>
</dbReference>
<dbReference type="AGR" id="MGI:104813"/>
<dbReference type="CTD" id="3720"/>
<dbReference type="MGI" id="MGI:104813">
    <property type="gene designation" value="Jarid2"/>
</dbReference>
<dbReference type="VEuPathDB" id="HostDB:ENSMUSG00000038518"/>
<dbReference type="eggNOG" id="KOG1246">
    <property type="taxonomic scope" value="Eukaryota"/>
</dbReference>
<dbReference type="GeneTree" id="ENSGT00940000159220"/>
<dbReference type="HOGENOM" id="CLU_007086_0_0_1"/>
<dbReference type="InParanoid" id="Q62315"/>
<dbReference type="OMA" id="TGADCIX"/>
<dbReference type="OrthoDB" id="8951118at2759"/>
<dbReference type="PhylomeDB" id="Q62315"/>
<dbReference type="TreeFam" id="TF323264"/>
<dbReference type="Reactome" id="R-MMU-212300">
    <property type="pathway name" value="PRC2 methylates histones and DNA"/>
</dbReference>
<dbReference type="BioGRID-ORCS" id="16468">
    <property type="hits" value="4 hits in 84 CRISPR screens"/>
</dbReference>
<dbReference type="ChiTaRS" id="Jarid2">
    <property type="organism name" value="mouse"/>
</dbReference>
<dbReference type="EvolutionaryTrace" id="Q62315"/>
<dbReference type="PRO" id="PR:Q62315"/>
<dbReference type="Proteomes" id="UP000000589">
    <property type="component" value="Chromosome 13"/>
</dbReference>
<dbReference type="RNAct" id="Q62315">
    <property type="molecule type" value="protein"/>
</dbReference>
<dbReference type="Bgee" id="ENSMUSG00000038518">
    <property type="expression patterns" value="Expressed in rostral migratory stream and 299 other cell types or tissues"/>
</dbReference>
<dbReference type="ExpressionAtlas" id="Q62315">
    <property type="expression patterns" value="baseline and differential"/>
</dbReference>
<dbReference type="GO" id="GO:0035098">
    <property type="term" value="C:ESC/E(Z) complex"/>
    <property type="evidence" value="ECO:0000314"/>
    <property type="project" value="UniProtKB"/>
</dbReference>
<dbReference type="GO" id="GO:0035097">
    <property type="term" value="C:histone methyltransferase complex"/>
    <property type="evidence" value="ECO:0000314"/>
    <property type="project" value="UniProtKB"/>
</dbReference>
<dbReference type="GO" id="GO:0005739">
    <property type="term" value="C:mitochondrion"/>
    <property type="evidence" value="ECO:0007669"/>
    <property type="project" value="Ensembl"/>
</dbReference>
<dbReference type="GO" id="GO:0005634">
    <property type="term" value="C:nucleus"/>
    <property type="evidence" value="ECO:0000314"/>
    <property type="project" value="UniProtKB"/>
</dbReference>
<dbReference type="GO" id="GO:0003682">
    <property type="term" value="F:chromatin binding"/>
    <property type="evidence" value="ECO:0000314"/>
    <property type="project" value="UniProtKB"/>
</dbReference>
<dbReference type="GO" id="GO:0003677">
    <property type="term" value="F:DNA binding"/>
    <property type="evidence" value="ECO:0000314"/>
    <property type="project" value="MGI"/>
</dbReference>
<dbReference type="GO" id="GO:0008134">
    <property type="term" value="F:transcription factor binding"/>
    <property type="evidence" value="ECO:0000353"/>
    <property type="project" value="UniProtKB"/>
</dbReference>
<dbReference type="GO" id="GO:0043130">
    <property type="term" value="F:ubiquitin binding"/>
    <property type="evidence" value="ECO:0000315"/>
    <property type="project" value="MGI"/>
</dbReference>
<dbReference type="GO" id="GO:0061649">
    <property type="term" value="F:ubiquitin-modified histone reader activity"/>
    <property type="evidence" value="ECO:0000315"/>
    <property type="project" value="MGI"/>
</dbReference>
<dbReference type="GO" id="GO:0060038">
    <property type="term" value="P:cardiac muscle cell proliferation"/>
    <property type="evidence" value="ECO:0000315"/>
    <property type="project" value="MGI"/>
</dbReference>
<dbReference type="GO" id="GO:0008283">
    <property type="term" value="P:cell population proliferation"/>
    <property type="evidence" value="ECO:0000315"/>
    <property type="project" value="MGI"/>
</dbReference>
<dbReference type="GO" id="GO:1990830">
    <property type="term" value="P:cellular response to leukemia inhibitory factor"/>
    <property type="evidence" value="ECO:0000270"/>
    <property type="project" value="MGI"/>
</dbReference>
<dbReference type="GO" id="GO:0140718">
    <property type="term" value="P:facultative heterochromatin formation"/>
    <property type="evidence" value="ECO:0000314"/>
    <property type="project" value="GO_Central"/>
</dbReference>
<dbReference type="GO" id="GO:0001889">
    <property type="term" value="P:liver development"/>
    <property type="evidence" value="ECO:0000315"/>
    <property type="project" value="MGI"/>
</dbReference>
<dbReference type="GO" id="GO:0060044">
    <property type="term" value="P:negative regulation of cardiac muscle cell proliferation"/>
    <property type="evidence" value="ECO:0000315"/>
    <property type="project" value="MGI"/>
</dbReference>
<dbReference type="GO" id="GO:0045892">
    <property type="term" value="P:negative regulation of DNA-templated transcription"/>
    <property type="evidence" value="ECO:0000314"/>
    <property type="project" value="MGI"/>
</dbReference>
<dbReference type="GO" id="GO:0000122">
    <property type="term" value="P:negative regulation of transcription by RNA polymerase II"/>
    <property type="evidence" value="ECO:0000314"/>
    <property type="project" value="NTNU_SB"/>
</dbReference>
<dbReference type="GO" id="GO:1902682">
    <property type="term" value="P:protein localization to pericentric heterochromatin"/>
    <property type="evidence" value="ECO:0000315"/>
    <property type="project" value="MGI"/>
</dbReference>
<dbReference type="GO" id="GO:0060816">
    <property type="term" value="P:random inactivation of X chromosome"/>
    <property type="evidence" value="ECO:0000315"/>
    <property type="project" value="MGI"/>
</dbReference>
<dbReference type="GO" id="GO:0042127">
    <property type="term" value="P:regulation of cell population proliferation"/>
    <property type="evidence" value="ECO:0000315"/>
    <property type="project" value="MGI"/>
</dbReference>
<dbReference type="GO" id="GO:0048536">
    <property type="term" value="P:spleen development"/>
    <property type="evidence" value="ECO:0000315"/>
    <property type="project" value="MGI"/>
</dbReference>
<dbReference type="GO" id="GO:0048863">
    <property type="term" value="P:stem cell differentiation"/>
    <property type="evidence" value="ECO:0000315"/>
    <property type="project" value="UniProtKB"/>
</dbReference>
<dbReference type="GO" id="GO:0048538">
    <property type="term" value="P:thymus development"/>
    <property type="evidence" value="ECO:0000315"/>
    <property type="project" value="MGI"/>
</dbReference>
<dbReference type="CDD" id="cd16870">
    <property type="entry name" value="ARID_JARD2"/>
    <property type="match status" value="1"/>
</dbReference>
<dbReference type="FunFam" id="2.60.120.650:FF:000007">
    <property type="entry name" value="Jumonji, AT rich interactive domain 2"/>
    <property type="match status" value="1"/>
</dbReference>
<dbReference type="FunFam" id="1.10.150.60:FF:000005">
    <property type="entry name" value="Jumonji, AT-rich interactive domain 2a"/>
    <property type="match status" value="1"/>
</dbReference>
<dbReference type="Gene3D" id="1.10.150.60">
    <property type="entry name" value="ARID DNA-binding domain"/>
    <property type="match status" value="1"/>
</dbReference>
<dbReference type="Gene3D" id="2.60.120.650">
    <property type="entry name" value="Cupin"/>
    <property type="match status" value="1"/>
</dbReference>
<dbReference type="InterPro" id="IPR001606">
    <property type="entry name" value="ARID_dom"/>
</dbReference>
<dbReference type="InterPro" id="IPR036431">
    <property type="entry name" value="ARID_dom_sf"/>
</dbReference>
<dbReference type="InterPro" id="IPR003347">
    <property type="entry name" value="JmjC_dom"/>
</dbReference>
<dbReference type="InterPro" id="IPR003349">
    <property type="entry name" value="JmjN"/>
</dbReference>
<dbReference type="InterPro" id="IPR004198">
    <property type="entry name" value="Znf_C5HC2"/>
</dbReference>
<dbReference type="PANTHER" id="PTHR10694">
    <property type="entry name" value="LYSINE-SPECIFIC DEMETHYLASE"/>
    <property type="match status" value="1"/>
</dbReference>
<dbReference type="PANTHER" id="PTHR10694:SF113">
    <property type="entry name" value="PROTEIN JUMONJI"/>
    <property type="match status" value="1"/>
</dbReference>
<dbReference type="Pfam" id="PF01388">
    <property type="entry name" value="ARID"/>
    <property type="match status" value="1"/>
</dbReference>
<dbReference type="Pfam" id="PF02373">
    <property type="entry name" value="JmjC"/>
    <property type="match status" value="1"/>
</dbReference>
<dbReference type="Pfam" id="PF02375">
    <property type="entry name" value="JmjN"/>
    <property type="match status" value="1"/>
</dbReference>
<dbReference type="Pfam" id="PF02928">
    <property type="entry name" value="zf-C5HC2"/>
    <property type="match status" value="1"/>
</dbReference>
<dbReference type="SMART" id="SM01014">
    <property type="entry name" value="ARID"/>
    <property type="match status" value="1"/>
</dbReference>
<dbReference type="SMART" id="SM00501">
    <property type="entry name" value="BRIGHT"/>
    <property type="match status" value="1"/>
</dbReference>
<dbReference type="SMART" id="SM00558">
    <property type="entry name" value="JmjC"/>
    <property type="match status" value="1"/>
</dbReference>
<dbReference type="SMART" id="SM00545">
    <property type="entry name" value="JmjN"/>
    <property type="match status" value="1"/>
</dbReference>
<dbReference type="SUPFAM" id="SSF46774">
    <property type="entry name" value="ARID-like"/>
    <property type="match status" value="1"/>
</dbReference>
<dbReference type="SUPFAM" id="SSF51197">
    <property type="entry name" value="Clavaminate synthase-like"/>
    <property type="match status" value="1"/>
</dbReference>
<dbReference type="PROSITE" id="PS51011">
    <property type="entry name" value="ARID"/>
    <property type="match status" value="1"/>
</dbReference>
<dbReference type="PROSITE" id="PS51184">
    <property type="entry name" value="JMJC"/>
    <property type="match status" value="1"/>
</dbReference>
<dbReference type="PROSITE" id="PS51183">
    <property type="entry name" value="JMJN"/>
    <property type="match status" value="1"/>
</dbReference>
<keyword id="KW-0002">3D-structure</keyword>
<keyword id="KW-0007">Acetylation</keyword>
<keyword id="KW-0025">Alternative splicing</keyword>
<keyword id="KW-0156">Chromatin regulator</keyword>
<keyword id="KW-0217">Developmental protein</keyword>
<keyword id="KW-0221">Differentiation</keyword>
<keyword id="KW-0539">Nucleus</keyword>
<keyword id="KW-0597">Phosphoprotein</keyword>
<keyword id="KW-1185">Reference proteome</keyword>
<keyword id="KW-0678">Repressor</keyword>
<keyword id="KW-0804">Transcription</keyword>
<keyword id="KW-0805">Transcription regulation</keyword>
<comment type="function">
    <text evidence="7 8 9 10 11 12 14 15 16 17 19">Regulator of histone methyltransferase complexes that plays an essential role in embryonic development, including heart and liver development, neural tube fusion process and hematopoiesis (PubMed:10807864, PubMed:12852854, PubMed:12890668, PubMed:15542826, PubMed:15870077, PubMed:19010785, PubMed:20064375, PubMed:20064376, PubMed:20075857). Acts as an accessory subunit for the core PRC2 (Polycomb repressive complex 2) complex, which mediates histone H3K27 (H3K27me3) trimethylation on chromatin (PubMed:20064375, PubMed:20064376). Binds DNA and mediates the recruitment of the PRC2 complex to target genes in embryonic stem cells, thereby playing a key role in stem cell differentiation and normal embryonic development (PubMed:20064375, PubMed:20075857). In cardiac cells, it is required to repress expression of cyclin-D1 (CCND1) by activating methylation of 'Lys-9' of histone H3 (H3K9me) by the GLP1/EHMT1 and G9a/EHMT2 histone methyltransferases (PubMed:12852854, PubMed:12890668, PubMed:19010785). Also acts as a transcriptional repressor of ANF via its interaction with GATA4 and NKX2-5 (PubMed:15542826). Participates in the negative regulation of cell proliferation signaling (PubMed:10913339). Does not have histone demethylase activity (PubMed:20064376).</text>
</comment>
<comment type="subunit">
    <text evidence="1 11 12 13 15 16 18 19">Associates with the PRC2 complex, which consists of the core components EED, EZH1 or EZH2, SUZ12, and RBBP4, and various combinations of accessory subunits including AEBP2, JARID2, PHF19, MTF2 and EPOP (PubMed:20064375, PubMed:20064376). Found in a monomeric PRC2.2 (class 2) complex consisting of at least SUZ12, RBBP4, AEBP2 and JARID2 (By similarity). Facilitates nucleosome binding of the PRC2 complex (By similarity). Interacts with SUZ12 (via C2H2-type zinc finger domain); the interaction is direct; competes with EPOP for SUZ12 binding (By similarity). Interacts with histone methyltransferases EHMT1/GLP1 and EHMT2/G9a (By similarity). Interacts with GATA4 (via the N-terminal region) (PubMed:15542826). Interacts with NKX2-5 (via the C-terminal region) (PubMed:15542826). Interacts with RB1 (PubMed:15870077). Interacts with ZNF496 (PubMed:17521633). Interacts with ESRRB (PubMed:26523946). Interacts with DDX18; this interaction inhibits the PRC2 complex (PubMed:31914400).</text>
</comment>
<comment type="interaction">
    <interactant intactId="EBI-493592">
        <id>Q62315</id>
    </interactant>
    <interactant intactId="EBI-904301">
        <id>Q921E6</id>
        <label>Eed</label>
    </interactant>
    <organismsDiffer>false</organismsDiffer>
    <experiments>11</experiments>
</comment>
<comment type="interaction">
    <interactant intactId="EBI-493592">
        <id>Q62315</id>
    </interactant>
    <interactant intactId="EBI-2531737">
        <id>P70351</id>
        <label>Ezh1</label>
    </interactant>
    <organismsDiffer>false</organismsDiffer>
    <experiments>4</experiments>
</comment>
<comment type="interaction">
    <interactant intactId="EBI-493592">
        <id>Q62315</id>
    </interactant>
    <interactant intactId="EBI-904311">
        <id>Q61188</id>
        <label>Ezh2</label>
    </interactant>
    <organismsDiffer>false</organismsDiffer>
    <experiments>15</experiments>
</comment>
<comment type="interaction">
    <interactant intactId="EBI-493592">
        <id>Q62315</id>
    </interactant>
    <interactant intactId="EBI-297008">
        <id>Q08369</id>
        <label>Gata4</label>
    </interactant>
    <organismsDiffer>false</organismsDiffer>
    <experiments>3</experiments>
</comment>
<comment type="interaction">
    <interactant intactId="EBI-493592">
        <id>Q62315</id>
    </interactant>
    <interactant intactId="EBI-297021">
        <id>P42582</id>
        <label>Nkx2-5</label>
    </interactant>
    <organismsDiffer>false</organismsDiffer>
    <experiments>3</experiments>
</comment>
<comment type="interaction">
    <interactant intactId="EBI-493592">
        <id>Q62315</id>
    </interactant>
    <interactant intactId="EBI-2526494">
        <id>Q80U70</id>
        <label>Suz12</label>
    </interactant>
    <organismsDiffer>false</organismsDiffer>
    <experiments>13</experiments>
</comment>
<comment type="interaction">
    <interactant intactId="EBI-493592">
        <id>Q62315</id>
    </interactant>
    <interactant intactId="EBI-7417351">
        <id>Q5SXI5</id>
        <label>Znf496</label>
    </interactant>
    <organismsDiffer>false</organismsDiffer>
    <experiments>6</experiments>
</comment>
<comment type="subcellular location">
    <subcellularLocation>
        <location evidence="2 3 7 8 15 16">Nucleus</location>
    </subcellularLocation>
    <text>Colocalizes with the PRC2 complex on chromatin.</text>
</comment>
<comment type="alternative products">
    <event type="alternative splicing"/>
    <isoform>
        <id>Q62315-1</id>
        <name>1</name>
        <sequence type="displayed"/>
    </isoform>
    <isoform>
        <id>Q62315-2</id>
        <name>2</name>
        <sequence type="described" ref="VSP_038758"/>
    </isoform>
</comment>
<comment type="tissue specificity">
    <text evidence="7">Widely expressed in embryos. In adults, expressed at high levels in heart, skeletal muscle, brain and thymus.</text>
</comment>
<comment type="domain">
    <text>The ARID domain is required to target the PRC2 complex to its target genes.</text>
</comment>
<comment type="domain">
    <text>The GSGFP motif is required for the interaction with SUZ12.</text>
</comment>
<comment type="disruption phenotype">
    <text evidence="6 7 20 21">Embryos die before 15.5 dpc and show severe cardiac morphological defects and altered heart-specific gene expression. Some, but not all, of the homozygotes develop an abnormal groove in a region just anterior to the midbrain-hindbrain boundary on the neural plate at 8-8.5 dpc and show a defect in neural tube closure in the midbrain region. Variable phenotypes are observed depending on the genetic backgrounds: mutant mice with a C57BL/6J X 129S1/Sv genetic background die upon birth and show cardiac defects such as ventricular septal defects, double-outlet right ventricle, and thin ventricular wall at later embryonic stages. In addition to the thin ventricular wall, mutant embryos with a pure BALB/c background show deficient cell growth in the liver, thymus, and spleen. In contrast, mutant mice with a C3H/He genetic background die at 11.5 dpc, which exhibit hyperplasia and increased cyclin-D1 (CCND1) expression in the trabecular layer of the ventricle at 10.5 dpc.</text>
</comment>
<comment type="miscellaneous">
    <text>'Jumonji' means 'cruciform' in Japanese.</text>
</comment>
<comment type="similarity">
    <text evidence="23">Belongs to the JARID2 family.</text>
</comment>
<comment type="caution">
    <text evidence="23">Despite the presence of a JmjC domain, lacks the conserved residues that bind the iron cofactor, explaining the absence of histone methyltransferase activity.</text>
</comment>
<comment type="sequence caution" evidence="23">
    <conflict type="frameshift">
        <sequence resource="EMBL-CDS" id="BAE27780"/>
    </conflict>
</comment>
<comment type="sequence caution" evidence="23">
    <conflict type="erroneous gene model prediction">
        <sequence resource="EMBL-CDS" id="EDL41007"/>
    </conflict>
</comment>
<proteinExistence type="evidence at protein level"/>